<organism>
    <name type="scientific">Saccharum officinarum</name>
    <name type="common">Sugarcane</name>
    <dbReference type="NCBI Taxonomy" id="4547"/>
    <lineage>
        <taxon>Eukaryota</taxon>
        <taxon>Viridiplantae</taxon>
        <taxon>Streptophyta</taxon>
        <taxon>Embryophyta</taxon>
        <taxon>Tracheophyta</taxon>
        <taxon>Spermatophyta</taxon>
        <taxon>Magnoliopsida</taxon>
        <taxon>Liliopsida</taxon>
        <taxon>Poales</taxon>
        <taxon>Poaceae</taxon>
        <taxon>PACMAD clade</taxon>
        <taxon>Panicoideae</taxon>
        <taxon>Andropogonodae</taxon>
        <taxon>Andropogoneae</taxon>
        <taxon>Saccharinae</taxon>
        <taxon>Saccharum</taxon>
        <taxon>Saccharum officinarum species complex</taxon>
    </lineage>
</organism>
<accession>Q6ENX3</accession>
<dbReference type="EC" id="2.7.7.6" evidence="1"/>
<dbReference type="EMBL" id="AP006714">
    <property type="protein sequence ID" value="BAD27283.1"/>
    <property type="molecule type" value="Genomic_DNA"/>
</dbReference>
<dbReference type="RefSeq" id="YP_009389561.1">
    <property type="nucleotide sequence ID" value="NC_035224.1"/>
</dbReference>
<dbReference type="SMR" id="Q6ENX3"/>
<dbReference type="GeneID" id="33347867"/>
<dbReference type="GO" id="GO:0009507">
    <property type="term" value="C:chloroplast"/>
    <property type="evidence" value="ECO:0007669"/>
    <property type="project" value="UniProtKB-SubCell"/>
</dbReference>
<dbReference type="GO" id="GO:0000428">
    <property type="term" value="C:DNA-directed RNA polymerase complex"/>
    <property type="evidence" value="ECO:0007669"/>
    <property type="project" value="UniProtKB-KW"/>
</dbReference>
<dbReference type="GO" id="GO:0005739">
    <property type="term" value="C:mitochondrion"/>
    <property type="evidence" value="ECO:0007669"/>
    <property type="project" value="GOC"/>
</dbReference>
<dbReference type="GO" id="GO:0003677">
    <property type="term" value="F:DNA binding"/>
    <property type="evidence" value="ECO:0007669"/>
    <property type="project" value="UniProtKB-UniRule"/>
</dbReference>
<dbReference type="GO" id="GO:0003899">
    <property type="term" value="F:DNA-directed RNA polymerase activity"/>
    <property type="evidence" value="ECO:0007669"/>
    <property type="project" value="UniProtKB-UniRule"/>
</dbReference>
<dbReference type="GO" id="GO:0032549">
    <property type="term" value="F:ribonucleoside binding"/>
    <property type="evidence" value="ECO:0007669"/>
    <property type="project" value="InterPro"/>
</dbReference>
<dbReference type="GO" id="GO:0006351">
    <property type="term" value="P:DNA-templated transcription"/>
    <property type="evidence" value="ECO:0007669"/>
    <property type="project" value="UniProtKB-UniRule"/>
</dbReference>
<dbReference type="CDD" id="cd00653">
    <property type="entry name" value="RNA_pol_B_RPB2"/>
    <property type="match status" value="1"/>
</dbReference>
<dbReference type="Gene3D" id="2.40.50.100">
    <property type="match status" value="1"/>
</dbReference>
<dbReference type="Gene3D" id="2.40.50.150">
    <property type="match status" value="1"/>
</dbReference>
<dbReference type="Gene3D" id="3.90.1100.10">
    <property type="match status" value="1"/>
</dbReference>
<dbReference type="Gene3D" id="2.30.150.10">
    <property type="entry name" value="DNA-directed RNA polymerase, beta subunit, external 1 domain"/>
    <property type="match status" value="1"/>
</dbReference>
<dbReference type="Gene3D" id="2.40.270.10">
    <property type="entry name" value="DNA-directed RNA polymerase, subunit 2, domain 6"/>
    <property type="match status" value="1"/>
</dbReference>
<dbReference type="Gene3D" id="3.90.1800.10">
    <property type="entry name" value="RNA polymerase alpha subunit dimerisation domain"/>
    <property type="match status" value="1"/>
</dbReference>
<dbReference type="Gene3D" id="3.90.1110.10">
    <property type="entry name" value="RNA polymerase Rpb2, domain 2"/>
    <property type="match status" value="1"/>
</dbReference>
<dbReference type="HAMAP" id="MF_01321">
    <property type="entry name" value="RNApol_bact_RpoB"/>
    <property type="match status" value="1"/>
</dbReference>
<dbReference type="InterPro" id="IPR042107">
    <property type="entry name" value="DNA-dir_RNA_pol_bsu_ext_1_sf"/>
</dbReference>
<dbReference type="InterPro" id="IPR015712">
    <property type="entry name" value="DNA-dir_RNA_pol_su2"/>
</dbReference>
<dbReference type="InterPro" id="IPR007120">
    <property type="entry name" value="DNA-dir_RNAP_su2_dom"/>
</dbReference>
<dbReference type="InterPro" id="IPR037033">
    <property type="entry name" value="DNA-dir_RNAP_su2_hyb_sf"/>
</dbReference>
<dbReference type="InterPro" id="IPR010243">
    <property type="entry name" value="RNA_pol_bsu_bac"/>
</dbReference>
<dbReference type="InterPro" id="IPR007121">
    <property type="entry name" value="RNA_pol_bsu_CS"/>
</dbReference>
<dbReference type="InterPro" id="IPR007642">
    <property type="entry name" value="RNA_pol_Rpb2_2"/>
</dbReference>
<dbReference type="InterPro" id="IPR037034">
    <property type="entry name" value="RNA_pol_Rpb2_2_sf"/>
</dbReference>
<dbReference type="InterPro" id="IPR007645">
    <property type="entry name" value="RNA_pol_Rpb2_3"/>
</dbReference>
<dbReference type="InterPro" id="IPR007641">
    <property type="entry name" value="RNA_pol_Rpb2_7"/>
</dbReference>
<dbReference type="InterPro" id="IPR014724">
    <property type="entry name" value="RNA_pol_RPB2_OB-fold"/>
</dbReference>
<dbReference type="NCBIfam" id="NF001616">
    <property type="entry name" value="PRK00405.1"/>
    <property type="match status" value="1"/>
</dbReference>
<dbReference type="PANTHER" id="PTHR20856">
    <property type="entry name" value="DNA-DIRECTED RNA POLYMERASE I SUBUNIT 2"/>
    <property type="match status" value="1"/>
</dbReference>
<dbReference type="Pfam" id="PF04561">
    <property type="entry name" value="RNA_pol_Rpb2_2"/>
    <property type="match status" value="1"/>
</dbReference>
<dbReference type="Pfam" id="PF04565">
    <property type="entry name" value="RNA_pol_Rpb2_3"/>
    <property type="match status" value="1"/>
</dbReference>
<dbReference type="Pfam" id="PF00562">
    <property type="entry name" value="RNA_pol_Rpb2_6"/>
    <property type="match status" value="1"/>
</dbReference>
<dbReference type="Pfam" id="PF04560">
    <property type="entry name" value="RNA_pol_Rpb2_7"/>
    <property type="match status" value="1"/>
</dbReference>
<dbReference type="SUPFAM" id="SSF64484">
    <property type="entry name" value="beta and beta-prime subunits of DNA dependent RNA-polymerase"/>
    <property type="match status" value="1"/>
</dbReference>
<dbReference type="PROSITE" id="PS01166">
    <property type="entry name" value="RNA_POL_BETA"/>
    <property type="match status" value="1"/>
</dbReference>
<comment type="function">
    <text evidence="1">DNA-dependent RNA polymerase catalyzes the transcription of DNA into RNA using the four ribonucleoside triphosphates as substrates.</text>
</comment>
<comment type="catalytic activity">
    <reaction evidence="1">
        <text>RNA(n) + a ribonucleoside 5'-triphosphate = RNA(n+1) + diphosphate</text>
        <dbReference type="Rhea" id="RHEA:21248"/>
        <dbReference type="Rhea" id="RHEA-COMP:14527"/>
        <dbReference type="Rhea" id="RHEA-COMP:17342"/>
        <dbReference type="ChEBI" id="CHEBI:33019"/>
        <dbReference type="ChEBI" id="CHEBI:61557"/>
        <dbReference type="ChEBI" id="CHEBI:140395"/>
        <dbReference type="EC" id="2.7.7.6"/>
    </reaction>
</comment>
<comment type="subunit">
    <text evidence="1">In plastids the minimal PEP RNA polymerase catalytic core is composed of four subunits: alpha, beta, beta', and beta''. When a (nuclear-encoded) sigma factor is associated with the core the holoenzyme is formed, which can initiate transcription.</text>
</comment>
<comment type="subcellular location">
    <subcellularLocation>
        <location>Plastid</location>
        <location>Chloroplast</location>
    </subcellularLocation>
</comment>
<comment type="similarity">
    <text evidence="1">Belongs to the RNA polymerase beta chain family.</text>
</comment>
<gene>
    <name evidence="1" type="primary">rpoB</name>
</gene>
<keyword id="KW-0150">Chloroplast</keyword>
<keyword id="KW-0240">DNA-directed RNA polymerase</keyword>
<keyword id="KW-0548">Nucleotidyltransferase</keyword>
<keyword id="KW-0934">Plastid</keyword>
<keyword id="KW-0804">Transcription</keyword>
<keyword id="KW-0808">Transferase</keyword>
<name>RPOB_SACOF</name>
<sequence length="1075" mass="121537">MLRNGNEGMSTIPGFSQIQFEGFCRFINQGLAEELEKFPTIKDPDHEIAFQLFAKGYQLLEPSIKERNAVYESLTYSSELYVSARLIFGFDVQKQTISIGNIPIMNSLGTFIINGIYRIVINQILLSPGIYYRSELDHKGISICTGTIISDWGGRSELAIDKKERIWARVSRKQKISILVLSSAMGSNLREILDNVSYPEIFLSFPNAKEKKRIESKEKAILEFYQQFACVGGDLVFSESLCEELQKKFFQQKCELGRVGRRNMNRRLNLDIPQNNTFLLPRDVLAATDHLIGMKFGTGILDDDDMNHLKNKRIRSVADLLQDQFGLALGRLQHAVQKTIRRVFIRQSKPTPQTLVTPTSTSILLITTYETFFGTYPLAQVFDQTNPLTQTVHGRKVSCLGPGGLTGRTASFRSRDIHPSHYGRICPIDTSEGINVGLTGSLAIHARIDHWWGSIESPFYEISEKAKEKKERQVVYLSPNRDEYYMIAAGNSLSLNQGIQEEQVVPARYRQEFLTIAWEQIHVRSIFPFQYFSIGGSLIPFIEHNDANRALMSSNMQRQAVPLSRSEKCIVGTGLERQTALDSRVSVIAEREGKIISSDSHKILLSSSGKTISIPLVAHRRSNKNTCMHQKPRVPRGKSIKKGQILAEGAATVGGELALGKNVLVAYMPWEGYNFEDAVLISERLVYEDIYTSFHIRKYEIQTDTTSQGSAEKITKQIPHLEEHLLRNLDRNGVVRLGSWVETGDILVGKLTPQIASESSYIAEAGLLRAIFGLEVSTSKETSLKLPIGGRGRVIDVKWIQRDPFDIMVRVYILQKREIKVGDKVAGRHGNKGIISKILPRQDMPYLQDGTPVDMVFNPLGVPSRMNVGQIFESSLGLAGDLLKKHYRIAPFDERYEQEASRKLVFSELYEASKQTKNPWVFEPEYPGKSRIFDGRTGDPFEQPVLIGKSYILKLIHQVDEKIHGRSTGPYSLVTQQPVRGRAKQGGQRIGEMEVWALEGFGVAHILQEILTYKSDHLIARQEILNATIWGKRVPNHEDPPESFRVLVRELRSLALELNHFLVSEKNFRVNREDV</sequence>
<feature type="chain" id="PRO_0000048045" description="DNA-directed RNA polymerase subunit beta">
    <location>
        <begin position="1"/>
        <end position="1075"/>
    </location>
</feature>
<protein>
    <recommendedName>
        <fullName evidence="1">DNA-directed RNA polymerase subunit beta</fullName>
        <ecNumber evidence="1">2.7.7.6</ecNumber>
    </recommendedName>
    <alternativeName>
        <fullName evidence="1">PEP</fullName>
    </alternativeName>
    <alternativeName>
        <fullName evidence="1">Plastid-encoded RNA polymerase subunit beta</fullName>
        <shortName evidence="1">RNA polymerase subunit beta</shortName>
    </alternativeName>
</protein>
<reference key="1">
    <citation type="journal article" date="2004" name="DNA Res.">
        <title>Complete nucleotide sequence of the sugarcane (Saccharum officinarum) chloroplast genome: a comparative analysis of four monocot chloroplast genomes.</title>
        <authorList>
            <person name="Asano T."/>
            <person name="Tsudzuki T."/>
            <person name="Takahashi S."/>
            <person name="Shimada H."/>
            <person name="Kadowaki K."/>
        </authorList>
    </citation>
    <scope>NUCLEOTIDE SEQUENCE [LARGE SCALE GENOMIC DNA]</scope>
</reference>
<geneLocation type="chloroplast"/>
<proteinExistence type="inferred from homology"/>
<evidence type="ECO:0000255" key="1">
    <source>
        <dbReference type="HAMAP-Rule" id="MF_01321"/>
    </source>
</evidence>